<accession>O75817</accession>
<accession>A4D2E0</accession>
<accession>Q9BV74</accession>
<name>POP7_HUMAN</name>
<dbReference type="EMBL" id="U94316">
    <property type="protein sequence ID" value="AAC24113.1"/>
    <property type="molecule type" value="mRNA"/>
</dbReference>
<dbReference type="EMBL" id="CH236956">
    <property type="protein sequence ID" value="EAL23821.1"/>
    <property type="molecule type" value="Genomic_DNA"/>
</dbReference>
<dbReference type="EMBL" id="CH471091">
    <property type="protein sequence ID" value="EAW76495.1"/>
    <property type="molecule type" value="Genomic_DNA"/>
</dbReference>
<dbReference type="EMBL" id="BC001430">
    <property type="protein sequence ID" value="AAH01430.1"/>
    <property type="molecule type" value="mRNA"/>
</dbReference>
<dbReference type="CCDS" id="CCDS5704.1"/>
<dbReference type="RefSeq" id="NP_005828.2">
    <property type="nucleotide sequence ID" value="NM_005837.3"/>
</dbReference>
<dbReference type="PDB" id="6AHR">
    <property type="method" value="EM"/>
    <property type="resolution" value="3.92 A"/>
    <property type="chains" value="G=1-140"/>
</dbReference>
<dbReference type="PDB" id="6AHU">
    <property type="method" value="EM"/>
    <property type="resolution" value="3.66 A"/>
    <property type="chains" value="G=1-140"/>
</dbReference>
<dbReference type="PDB" id="6CWX">
    <property type="method" value="X-ray"/>
    <property type="resolution" value="2.25 A"/>
    <property type="chains" value="A=1-140"/>
</dbReference>
<dbReference type="PDB" id="6LT7">
    <property type="method" value="X-ray"/>
    <property type="resolution" value="2.70 A"/>
    <property type="chains" value="A/D=1-140"/>
</dbReference>
<dbReference type="PDBsum" id="6AHR"/>
<dbReference type="PDBsum" id="6AHU"/>
<dbReference type="PDBsum" id="6CWX"/>
<dbReference type="PDBsum" id="6LT7"/>
<dbReference type="EMDB" id="EMD-9626"/>
<dbReference type="EMDB" id="EMD-9627"/>
<dbReference type="SMR" id="O75817"/>
<dbReference type="BioGRID" id="115542">
    <property type="interactions" value="77"/>
</dbReference>
<dbReference type="ComplexPortal" id="CPX-2876">
    <property type="entry name" value="Ribonuclease MRP complex"/>
</dbReference>
<dbReference type="ComplexPortal" id="CPX-2877">
    <property type="entry name" value="Nucleolar ribonuclease P complex"/>
</dbReference>
<dbReference type="CORUM" id="O75817"/>
<dbReference type="FunCoup" id="O75817">
    <property type="interactions" value="1556"/>
</dbReference>
<dbReference type="IntAct" id="O75817">
    <property type="interactions" value="45"/>
</dbReference>
<dbReference type="MINT" id="O75817"/>
<dbReference type="STRING" id="9606.ENSP00000304353"/>
<dbReference type="iPTMnet" id="O75817"/>
<dbReference type="PhosphoSitePlus" id="O75817"/>
<dbReference type="BioMuta" id="POP7"/>
<dbReference type="jPOST" id="O75817"/>
<dbReference type="MassIVE" id="O75817"/>
<dbReference type="PaxDb" id="9606-ENSP00000304353"/>
<dbReference type="PeptideAtlas" id="O75817"/>
<dbReference type="ProteomicsDB" id="50207"/>
<dbReference type="Pumba" id="O75817"/>
<dbReference type="Antibodypedia" id="30824">
    <property type="antibodies" value="82 antibodies from 23 providers"/>
</dbReference>
<dbReference type="DNASU" id="10248"/>
<dbReference type="Ensembl" id="ENST00000303151.5">
    <property type="protein sequence ID" value="ENSP00000304353.4"/>
    <property type="gene ID" value="ENSG00000172336.5"/>
</dbReference>
<dbReference type="GeneID" id="10248"/>
<dbReference type="KEGG" id="hsa:10248"/>
<dbReference type="MANE-Select" id="ENST00000303151.5">
    <property type="protein sequence ID" value="ENSP00000304353.4"/>
    <property type="RefSeq nucleotide sequence ID" value="NM_005837.3"/>
    <property type="RefSeq protein sequence ID" value="NP_005828.2"/>
</dbReference>
<dbReference type="UCSC" id="uc003uwh.5">
    <property type="organism name" value="human"/>
</dbReference>
<dbReference type="AGR" id="HGNC:19949"/>
<dbReference type="CTD" id="10248"/>
<dbReference type="DisGeNET" id="10248"/>
<dbReference type="GeneCards" id="POP7"/>
<dbReference type="HGNC" id="HGNC:19949">
    <property type="gene designation" value="POP7"/>
</dbReference>
<dbReference type="HPA" id="ENSG00000172336">
    <property type="expression patterns" value="Low tissue specificity"/>
</dbReference>
<dbReference type="MIM" id="606113">
    <property type="type" value="gene"/>
</dbReference>
<dbReference type="neXtProt" id="NX_O75817"/>
<dbReference type="OpenTargets" id="ENSG00000172336"/>
<dbReference type="PharmGKB" id="PA134887425"/>
<dbReference type="VEuPathDB" id="HostDB:ENSG00000172336"/>
<dbReference type="eggNOG" id="KOG3631">
    <property type="taxonomic scope" value="Eukaryota"/>
</dbReference>
<dbReference type="GeneTree" id="ENSGT00510000048483"/>
<dbReference type="InParanoid" id="O75817"/>
<dbReference type="OMA" id="EVFLHCT"/>
<dbReference type="OrthoDB" id="416729at2759"/>
<dbReference type="PAN-GO" id="O75817">
    <property type="GO annotations" value="3 GO annotations based on evolutionary models"/>
</dbReference>
<dbReference type="PhylomeDB" id="O75817"/>
<dbReference type="TreeFam" id="TF313948"/>
<dbReference type="BRENDA" id="3.1.26.5">
    <property type="organism ID" value="2681"/>
</dbReference>
<dbReference type="PathwayCommons" id="O75817"/>
<dbReference type="Reactome" id="R-HSA-6784531">
    <property type="pathway name" value="tRNA processing in the nucleus"/>
</dbReference>
<dbReference type="SignaLink" id="O75817"/>
<dbReference type="BioGRID-ORCS" id="10248">
    <property type="hits" value="619 hits in 1157 CRISPR screens"/>
</dbReference>
<dbReference type="CD-CODE" id="91857CE7">
    <property type="entry name" value="Nucleolus"/>
</dbReference>
<dbReference type="CD-CODE" id="B75B0A5E">
    <property type="entry name" value="SMN-Rpp20 complex"/>
</dbReference>
<dbReference type="GeneWiki" id="POP7"/>
<dbReference type="GenomeRNAi" id="10248"/>
<dbReference type="Pharos" id="O75817">
    <property type="development level" value="Tbio"/>
</dbReference>
<dbReference type="PRO" id="PR:O75817"/>
<dbReference type="Proteomes" id="UP000005640">
    <property type="component" value="Chromosome 7"/>
</dbReference>
<dbReference type="RNAct" id="O75817">
    <property type="molecule type" value="protein"/>
</dbReference>
<dbReference type="Bgee" id="ENSG00000172336">
    <property type="expression patterns" value="Expressed in prefrontal cortex and 186 other cell types or tissues"/>
</dbReference>
<dbReference type="ExpressionAtlas" id="O75817">
    <property type="expression patterns" value="baseline and differential"/>
</dbReference>
<dbReference type="GO" id="GO:0005737">
    <property type="term" value="C:cytoplasm"/>
    <property type="evidence" value="ECO:0007669"/>
    <property type="project" value="UniProtKB-SubCell"/>
</dbReference>
<dbReference type="GO" id="GO:0043231">
    <property type="term" value="C:intracellular membrane-bounded organelle"/>
    <property type="evidence" value="ECO:0000314"/>
    <property type="project" value="HPA"/>
</dbReference>
<dbReference type="GO" id="GO:0030681">
    <property type="term" value="C:multimeric ribonuclease P complex"/>
    <property type="evidence" value="ECO:0000314"/>
    <property type="project" value="UniProtKB"/>
</dbReference>
<dbReference type="GO" id="GO:0005655">
    <property type="term" value="C:nucleolar ribonuclease P complex"/>
    <property type="evidence" value="ECO:0007669"/>
    <property type="project" value="InterPro"/>
</dbReference>
<dbReference type="GO" id="GO:0005730">
    <property type="term" value="C:nucleolus"/>
    <property type="evidence" value="ECO:0000314"/>
    <property type="project" value="UniProtKB"/>
</dbReference>
<dbReference type="GO" id="GO:0005654">
    <property type="term" value="C:nucleoplasm"/>
    <property type="evidence" value="ECO:0000304"/>
    <property type="project" value="Reactome"/>
</dbReference>
<dbReference type="GO" id="GO:0005634">
    <property type="term" value="C:nucleus"/>
    <property type="evidence" value="ECO:0000318"/>
    <property type="project" value="GO_Central"/>
</dbReference>
<dbReference type="GO" id="GO:0000172">
    <property type="term" value="C:ribonuclease MRP complex"/>
    <property type="evidence" value="ECO:0000314"/>
    <property type="project" value="FlyBase"/>
</dbReference>
<dbReference type="GO" id="GO:0004526">
    <property type="term" value="F:ribonuclease P activity"/>
    <property type="evidence" value="ECO:0007669"/>
    <property type="project" value="UniProtKB-EC"/>
</dbReference>
<dbReference type="GO" id="GO:0033204">
    <property type="term" value="F:ribonuclease P RNA binding"/>
    <property type="evidence" value="ECO:0000314"/>
    <property type="project" value="UniProtKB"/>
</dbReference>
<dbReference type="GO" id="GO:0003723">
    <property type="term" value="F:RNA binding"/>
    <property type="evidence" value="ECO:0007005"/>
    <property type="project" value="UniProtKB"/>
</dbReference>
<dbReference type="GO" id="GO:0006364">
    <property type="term" value="P:rRNA processing"/>
    <property type="evidence" value="ECO:0007669"/>
    <property type="project" value="UniProtKB-KW"/>
</dbReference>
<dbReference type="GO" id="GO:0001682">
    <property type="term" value="P:tRNA 5'-leader removal"/>
    <property type="evidence" value="ECO:0000314"/>
    <property type="project" value="UniProtKB"/>
</dbReference>
<dbReference type="GO" id="GO:0008033">
    <property type="term" value="P:tRNA processing"/>
    <property type="evidence" value="ECO:0000318"/>
    <property type="project" value="GO_Central"/>
</dbReference>
<dbReference type="DisProt" id="DP02615"/>
<dbReference type="FunFam" id="3.30.110.20:FF:000002">
    <property type="entry name" value="Ribonuclease P protein subunit p20"/>
    <property type="match status" value="1"/>
</dbReference>
<dbReference type="Gene3D" id="3.30.110.20">
    <property type="entry name" value="Alba-like domain"/>
    <property type="match status" value="1"/>
</dbReference>
<dbReference type="InterPro" id="IPR036882">
    <property type="entry name" value="Alba-like_dom_sf"/>
</dbReference>
<dbReference type="InterPro" id="IPR014612">
    <property type="entry name" value="Pop7/Rpp20"/>
</dbReference>
<dbReference type="PANTHER" id="PTHR15314">
    <property type="entry name" value="RIBONUCLEASE P PROTEIN SUBUNIT P20"/>
    <property type="match status" value="1"/>
</dbReference>
<dbReference type="PANTHER" id="PTHR15314:SF1">
    <property type="entry name" value="RIBONUCLEASE P PROTEIN SUBUNIT P20"/>
    <property type="match status" value="1"/>
</dbReference>
<dbReference type="Pfam" id="PF12328">
    <property type="entry name" value="Rpp20"/>
    <property type="match status" value="1"/>
</dbReference>
<dbReference type="PIRSF" id="PIRSF036572">
    <property type="entry name" value="RPP20"/>
    <property type="match status" value="1"/>
</dbReference>
<dbReference type="SUPFAM" id="SSF82704">
    <property type="entry name" value="AlbA-like"/>
    <property type="match status" value="1"/>
</dbReference>
<feature type="chain" id="PRO_0000058518" description="Ribonuclease P protein subunit p20">
    <location>
        <begin position="1"/>
        <end position="140"/>
    </location>
</feature>
<feature type="mutagenesis site" description="Strongly reduced interaction with RPP25." evidence="4">
    <original>N</original>
    <variation>Q</variation>
    <location>
        <position position="40"/>
    </location>
</feature>
<feature type="sequence conflict" description="In Ref. 1; AAC24113." evidence="10" ref="1">
    <original>R</original>
    <variation>H</variation>
    <location>
        <position position="80"/>
    </location>
</feature>
<feature type="strand" evidence="14">
    <location>
        <begin position="36"/>
        <end position="38"/>
    </location>
</feature>
<feature type="strand" evidence="14">
    <location>
        <begin position="41"/>
        <end position="43"/>
    </location>
</feature>
<feature type="helix" evidence="14">
    <location>
        <begin position="45"/>
        <end position="57"/>
    </location>
</feature>
<feature type="strand" evidence="14">
    <location>
        <begin position="67"/>
        <end position="74"/>
    </location>
</feature>
<feature type="helix" evidence="14">
    <location>
        <begin position="75"/>
        <end position="77"/>
    </location>
</feature>
<feature type="helix" evidence="14">
    <location>
        <begin position="78"/>
        <end position="90"/>
    </location>
</feature>
<feature type="turn" evidence="14">
    <location>
        <begin position="91"/>
        <end position="94"/>
    </location>
</feature>
<feature type="strand" evidence="14">
    <location>
        <begin position="96"/>
        <end position="112"/>
    </location>
</feature>
<feature type="strand" evidence="15">
    <location>
        <begin position="116"/>
        <end position="118"/>
    </location>
</feature>
<feature type="strand" evidence="14">
    <location>
        <begin position="121"/>
        <end position="136"/>
    </location>
</feature>
<protein>
    <recommendedName>
        <fullName>Ribonuclease P protein subunit p20</fullName>
        <shortName>RNaseP protein p20</shortName>
    </recommendedName>
    <alternativeName>
        <fullName>Ribonucleases P/MRP protein subunit POP7 homolog</fullName>
        <shortName>hPOP7</shortName>
    </alternativeName>
</protein>
<gene>
    <name type="primary">POP7</name>
    <name evidence="9" type="synonym">RPP20</name>
</gene>
<organism>
    <name type="scientific">Homo sapiens</name>
    <name type="common">Human</name>
    <dbReference type="NCBI Taxonomy" id="9606"/>
    <lineage>
        <taxon>Eukaryota</taxon>
        <taxon>Metazoa</taxon>
        <taxon>Chordata</taxon>
        <taxon>Craniata</taxon>
        <taxon>Vertebrata</taxon>
        <taxon>Euteleostomi</taxon>
        <taxon>Mammalia</taxon>
        <taxon>Eutheria</taxon>
        <taxon>Euarchontoglires</taxon>
        <taxon>Primates</taxon>
        <taxon>Haplorrhini</taxon>
        <taxon>Catarrhini</taxon>
        <taxon>Hominidae</taxon>
        <taxon>Homo</taxon>
    </lineage>
</organism>
<evidence type="ECO:0000269" key="1">
    <source>
    </source>
</evidence>
<evidence type="ECO:0000269" key="2">
    <source>
    </source>
</evidence>
<evidence type="ECO:0000269" key="3">
    <source>
    </source>
</evidence>
<evidence type="ECO:0000269" key="4">
    <source>
    </source>
</evidence>
<evidence type="ECO:0000269" key="5">
    <source>
    </source>
</evidence>
<evidence type="ECO:0000269" key="6">
    <source>
    </source>
</evidence>
<evidence type="ECO:0000269" key="7">
    <source>
    </source>
</evidence>
<evidence type="ECO:0000269" key="8">
    <source>
    </source>
</evidence>
<evidence type="ECO:0000303" key="9">
    <source>
    </source>
</evidence>
<evidence type="ECO:0000305" key="10"/>
<evidence type="ECO:0007744" key="11">
    <source>
        <dbReference type="PDB" id="6AHR"/>
    </source>
</evidence>
<evidence type="ECO:0007744" key="12">
    <source>
        <dbReference type="PDB" id="6AHU"/>
    </source>
</evidence>
<evidence type="ECO:0007744" key="13">
    <source>
        <dbReference type="PDB" id="6CWX"/>
    </source>
</evidence>
<evidence type="ECO:0007829" key="14">
    <source>
        <dbReference type="PDB" id="6CWX"/>
    </source>
</evidence>
<evidence type="ECO:0007829" key="15">
    <source>
        <dbReference type="PDB" id="6LT7"/>
    </source>
</evidence>
<proteinExistence type="evidence at protein level"/>
<reference key="1">
    <citation type="journal article" date="1998" name="RNA">
        <title>Autoantigenic properties of some protein subunits of catalytically active complexes of human ribonuclease P.</title>
        <authorList>
            <person name="Jarrous N."/>
            <person name="Eder P.S."/>
            <person name="Guerrier-Takada C."/>
            <person name="Hoog C."/>
            <person name="Altman S."/>
        </authorList>
    </citation>
    <scope>NUCLEOTIDE SEQUENCE [MRNA]</scope>
    <scope>PROTEIN SEQUENCE OF 10-20</scope>
    <scope>FUNCTION</scope>
    <scope>IDENTIFICATION IN THE RNASE P COMPLEX</scope>
</reference>
<reference key="2">
    <citation type="journal article" date="2003" name="Science">
        <title>Human chromosome 7: DNA sequence and biology.</title>
        <authorList>
            <person name="Scherer S.W."/>
            <person name="Cheung J."/>
            <person name="MacDonald J.R."/>
            <person name="Osborne L.R."/>
            <person name="Nakabayashi K."/>
            <person name="Herbrick J.-A."/>
            <person name="Carson A.R."/>
            <person name="Parker-Katiraee L."/>
            <person name="Skaug J."/>
            <person name="Khaja R."/>
            <person name="Zhang J."/>
            <person name="Hudek A.K."/>
            <person name="Li M."/>
            <person name="Haddad M."/>
            <person name="Duggan G.E."/>
            <person name="Fernandez B.A."/>
            <person name="Kanematsu E."/>
            <person name="Gentles S."/>
            <person name="Christopoulos C.C."/>
            <person name="Choufani S."/>
            <person name="Kwasnicka D."/>
            <person name="Zheng X.H."/>
            <person name="Lai Z."/>
            <person name="Nusskern D.R."/>
            <person name="Zhang Q."/>
            <person name="Gu Z."/>
            <person name="Lu F."/>
            <person name="Zeesman S."/>
            <person name="Nowaczyk M.J."/>
            <person name="Teshima I."/>
            <person name="Chitayat D."/>
            <person name="Shuman C."/>
            <person name="Weksberg R."/>
            <person name="Zackai E.H."/>
            <person name="Grebe T.A."/>
            <person name="Cox S.R."/>
            <person name="Kirkpatrick S.J."/>
            <person name="Rahman N."/>
            <person name="Friedman J.M."/>
            <person name="Heng H.H.Q."/>
            <person name="Pelicci P.G."/>
            <person name="Lo-Coco F."/>
            <person name="Belloni E."/>
            <person name="Shaffer L.G."/>
            <person name="Pober B."/>
            <person name="Morton C.C."/>
            <person name="Gusella J.F."/>
            <person name="Bruns G.A.P."/>
            <person name="Korf B.R."/>
            <person name="Quade B.J."/>
            <person name="Ligon A.H."/>
            <person name="Ferguson H."/>
            <person name="Higgins A.W."/>
            <person name="Leach N.T."/>
            <person name="Herrick S.R."/>
            <person name="Lemyre E."/>
            <person name="Farra C.G."/>
            <person name="Kim H.-G."/>
            <person name="Summers A.M."/>
            <person name="Gripp K.W."/>
            <person name="Roberts W."/>
            <person name="Szatmari P."/>
            <person name="Winsor E.J.T."/>
            <person name="Grzeschik K.-H."/>
            <person name="Teebi A."/>
            <person name="Minassian B.A."/>
            <person name="Kere J."/>
            <person name="Armengol L."/>
            <person name="Pujana M.A."/>
            <person name="Estivill X."/>
            <person name="Wilson M.D."/>
            <person name="Koop B.F."/>
            <person name="Tosi S."/>
            <person name="Moore G.E."/>
            <person name="Boright A.P."/>
            <person name="Zlotorynski E."/>
            <person name="Kerem B."/>
            <person name="Kroisel P.M."/>
            <person name="Petek E."/>
            <person name="Oscier D.G."/>
            <person name="Mould S.J."/>
            <person name="Doehner H."/>
            <person name="Doehner K."/>
            <person name="Rommens J.M."/>
            <person name="Vincent J.B."/>
            <person name="Venter J.C."/>
            <person name="Li P.W."/>
            <person name="Mural R.J."/>
            <person name="Adams M.D."/>
            <person name="Tsui L.-C."/>
        </authorList>
    </citation>
    <scope>NUCLEOTIDE SEQUENCE [LARGE SCALE GENOMIC DNA]</scope>
</reference>
<reference key="3">
    <citation type="submission" date="2005-09" db="EMBL/GenBank/DDBJ databases">
        <authorList>
            <person name="Mural R.J."/>
            <person name="Istrail S."/>
            <person name="Sutton G.G."/>
            <person name="Florea L."/>
            <person name="Halpern A.L."/>
            <person name="Mobarry C.M."/>
            <person name="Lippert R."/>
            <person name="Walenz B."/>
            <person name="Shatkay H."/>
            <person name="Dew I."/>
            <person name="Miller J.R."/>
            <person name="Flanigan M.J."/>
            <person name="Edwards N.J."/>
            <person name="Bolanos R."/>
            <person name="Fasulo D."/>
            <person name="Halldorsson B.V."/>
            <person name="Hannenhalli S."/>
            <person name="Turner R."/>
            <person name="Yooseph S."/>
            <person name="Lu F."/>
            <person name="Nusskern D.R."/>
            <person name="Shue B.C."/>
            <person name="Zheng X.H."/>
            <person name="Zhong F."/>
            <person name="Delcher A.L."/>
            <person name="Huson D.H."/>
            <person name="Kravitz S.A."/>
            <person name="Mouchard L."/>
            <person name="Reinert K."/>
            <person name="Remington K.A."/>
            <person name="Clark A.G."/>
            <person name="Waterman M.S."/>
            <person name="Eichler E.E."/>
            <person name="Adams M.D."/>
            <person name="Hunkapiller M.W."/>
            <person name="Myers E.W."/>
            <person name="Venter J.C."/>
        </authorList>
    </citation>
    <scope>NUCLEOTIDE SEQUENCE [LARGE SCALE GENOMIC DNA]</scope>
</reference>
<reference key="4">
    <citation type="journal article" date="2004" name="Genome Res.">
        <title>The status, quality, and expansion of the NIH full-length cDNA project: the Mammalian Gene Collection (MGC).</title>
        <authorList>
            <consortium name="The MGC Project Team"/>
        </authorList>
    </citation>
    <scope>NUCLEOTIDE SEQUENCE [LARGE SCALE MRNA]</scope>
    <source>
        <tissue>Placenta</tissue>
    </source>
</reference>
<reference key="5">
    <citation type="journal article" date="2004" name="Nucleic Acids Res.">
        <title>Mutual interactions between subunits of the human RNase MRP ribonucleoprotein complex.</title>
        <authorList>
            <person name="Welting T.J."/>
            <person name="van Venrooij W.J."/>
            <person name="Pruijn G.J."/>
        </authorList>
    </citation>
    <scope>IDENTIFICATION IN THE RNASE P AND RNASE MRP COMPLEXES</scope>
    <scope>SUBUNIT</scope>
</reference>
<reference key="6">
    <citation type="journal article" date="2004" name="Biochem. Biophys. Res. Commun.">
        <title>Rpp20 interacts with SMN and is re-distributed into SMN granules in response to stress.</title>
        <authorList>
            <person name="Hua Y."/>
            <person name="Zhou J."/>
        </authorList>
    </citation>
    <scope>INTERACTION WITH SMN1</scope>
    <scope>SUBCELLULAR LOCATION</scope>
</reference>
<reference key="7">
    <citation type="journal article" date="2006" name="RNA">
        <title>Differential association of protein subunits with the human RNase MRP and RNase P complexes.</title>
        <authorList>
            <person name="Welting T.J."/>
            <person name="Kikkert B.J."/>
            <person name="van Venrooij W.J."/>
            <person name="Pruijn G.J."/>
        </authorList>
    </citation>
    <scope>IDENTIFICATION IN RNASE P AND MRP COMPLEXES</scope>
    <scope>SUBUNIT</scope>
</reference>
<reference key="8">
    <citation type="journal article" date="2010" name="Nucleic Acids Res.">
        <title>Heterodimerization of the human RNase P/MRP subunits Rpp20 and Rpp25 is a prerequisite for interaction with the P3 arm of RNase MRP RNA.</title>
        <authorList>
            <person name="Hands-Taylor K.L."/>
            <person name="Martino L."/>
            <person name="Tata R."/>
            <person name="Babon J.J."/>
            <person name="Bui T.T."/>
            <person name="Drake A.F."/>
            <person name="Beavil R.L."/>
            <person name="Pruijn G.J."/>
            <person name="Brown P.R."/>
            <person name="Conte M.R."/>
        </authorList>
    </citation>
    <scope>SUBCELLULAR LOCATION</scope>
    <scope>SUBUNIT</scope>
    <scope>INTERACTION WITH RPP25</scope>
    <scope>MUTAGENESIS OF ASN-40</scope>
</reference>
<reference key="9">
    <citation type="journal article" date="2011" name="BMC Syst. Biol.">
        <title>Initial characterization of the human central proteome.</title>
        <authorList>
            <person name="Burkard T.R."/>
            <person name="Planyavsky M."/>
            <person name="Kaupe I."/>
            <person name="Breitwieser F.P."/>
            <person name="Buerckstuemmer T."/>
            <person name="Bennett K.L."/>
            <person name="Superti-Furga G."/>
            <person name="Colinge J."/>
        </authorList>
    </citation>
    <scope>IDENTIFICATION BY MASS SPECTROMETRY [LARGE SCALE ANALYSIS]</scope>
</reference>
<reference key="10">
    <citation type="journal article" date="2017" name="Genes Dev.">
        <title>Targeted CRISPR disruption reveals a role for RNase MRP RNA in human preribosomal RNA processing.</title>
        <authorList>
            <person name="Goldfarb K.C."/>
            <person name="Cech T.R."/>
        </authorList>
    </citation>
    <scope>FUNCTION</scope>
    <scope>SUBUNIT</scope>
</reference>
<reference evidence="11 12" key="11">
    <citation type="journal article" date="2018" name="Cell">
        <title>Cryo-EM Structure of the Human Ribonuclease P Holoenzyme.</title>
        <authorList>
            <person name="Wu J."/>
            <person name="Niu S."/>
            <person name="Tan M."/>
            <person name="Huang C."/>
            <person name="Li M."/>
            <person name="Song Y."/>
            <person name="Wang Q."/>
            <person name="Chen J."/>
            <person name="Shi S."/>
            <person name="Lan P."/>
            <person name="Lei M."/>
        </authorList>
    </citation>
    <scope>STRUCTURE BY ELECTRON MICROSCOPY (3.66 ANGSTROMS) OF RNASE P HOLOENZYME IN COMPLEX WITH TRNA</scope>
    <scope>FUNCTION</scope>
    <scope>SUBUNIT</scope>
</reference>
<reference evidence="13" key="12">
    <citation type="journal article" date="2018" name="J. Mol. Biol.">
        <title>Crystal Structure of Human Rpp20/Rpp25 Reveals Quaternary Level Adaptation of the Alba Scaffold as Structural Basis for Single-stranded RNA Binding.</title>
        <authorList>
            <person name="Chan C.W."/>
            <person name="Kiesel B.R."/>
            <person name="Mondragon A."/>
        </authorList>
    </citation>
    <scope>X-RAY CRYSTALLOGRAPHY (2.25 ANGSTROMS) IN COMPLEX WITH RPP25</scope>
    <scope>SUBUNIT</scope>
    <scope>RNA-BINDING</scope>
</reference>
<keyword id="KW-0002">3D-structure</keyword>
<keyword id="KW-0963">Cytoplasm</keyword>
<keyword id="KW-0903">Direct protein sequencing</keyword>
<keyword id="KW-0539">Nucleus</keyword>
<keyword id="KW-1267">Proteomics identification</keyword>
<keyword id="KW-1185">Reference proteome</keyword>
<keyword id="KW-0694">RNA-binding</keyword>
<keyword id="KW-0698">rRNA processing</keyword>
<keyword id="KW-0819">tRNA processing</keyword>
<comment type="function">
    <text evidence="5 7 8">Component of ribonuclease P, a ribonucleoprotein complex that generates mature tRNA molecules by cleaving their 5'-ends (PubMed:30454648, PubMed:9630247). Also a component of the MRP ribonuclease complex, which cleaves pre-rRNA sequences (PubMed:28115465).</text>
</comment>
<comment type="subunit">
    <text evidence="1 2 3 4 5 6 7 8">Component of nuclear RNase P and RNase MRP complexes (PubMed:15096576, PubMed:16723659, PubMed:20215441, PubMed:30454648, PubMed:9630247). RNase P consists of a catalytic RNA moiety and 10 different protein chains; POP1, POP4, POP5, POP7, RPP14, RPP21, RPP25, RPP30, RPP38 and RPP40 (PubMed:16723659, PubMed:30454648, PubMed:9630247). Within the RNase P complex, POP1, POP7 and RPP25 form the 'finger' subcomplex, POP5, RPP14, RPP40 and homodimeric RPP30 form the 'palm' subcomplex, and RPP21, POP4 and RPP38 form the 'wrist' subcomplex. All subunits of the RNase P complex interact with the catalytic RNA (PubMed:30454648). Several subunits of RNase P are also part of the RNase MRP complex. RNase MRP consists of a catalytic RNA moiety and about 8 protein subunits; POP1, POP7, RPP25, RPP30, RPP38, RPP40 and possibly also POP4 and POP5 (PubMed:15096576, PubMed:16723659, PubMed:28115465). Interacts with SMN1 (PubMed:14715275). POP7 forms a heterodimer with RPP25 that binds to the P3 stem loop of the catalytic RNA (PubMed:15096576, PubMed:20215441, PubMed:29625199).</text>
</comment>
<comment type="interaction">
    <interactant intactId="EBI-366574">
        <id>O75817</id>
    </interactant>
    <interactant intactId="EBI-2961725">
        <id>Q96LT7</id>
        <label>C9orf72</label>
    </interactant>
    <organismsDiffer>false</organismsDiffer>
    <experiments>3</experiments>
</comment>
<comment type="interaction">
    <interactant intactId="EBI-366574">
        <id>O75817</id>
    </interactant>
    <interactant intactId="EBI-1052105">
        <id>Q14657</id>
        <label>LAGE3</label>
    </interactant>
    <organismsDiffer>false</organismsDiffer>
    <experiments>4</experiments>
</comment>
<comment type="interaction">
    <interactant intactId="EBI-366574">
        <id>O75817</id>
    </interactant>
    <interactant intactId="EBI-366570">
        <id>Q9BUL9</id>
        <label>RPP25</label>
    </interactant>
    <organismsDiffer>false</organismsDiffer>
    <experiments>10</experiments>
</comment>
<comment type="interaction">
    <interactant intactId="EBI-366574">
        <id>O75817</id>
    </interactant>
    <interactant intactId="EBI-10189722">
        <id>Q8N5L8</id>
        <label>RPP25L</label>
    </interactant>
    <organismsDiffer>false</organismsDiffer>
    <experiments>14</experiments>
</comment>
<comment type="interaction">
    <interactant intactId="EBI-366574">
        <id>O75817</id>
    </interactant>
    <interactant intactId="EBI-395421">
        <id>Q16637</id>
        <label>SMN2</label>
    </interactant>
    <organismsDiffer>false</organismsDiffer>
    <experiments>5</experiments>
</comment>
<comment type="subcellular location">
    <subcellularLocation>
        <location evidence="1 4">Nucleus</location>
        <location evidence="1 4">Nucleolus</location>
    </subcellularLocation>
    <subcellularLocation>
        <location evidence="1">Cytoplasm</location>
    </subcellularLocation>
    <subcellularLocation>
        <location evidence="1">Cytoplasmic granule</location>
    </subcellularLocation>
    <text evidence="1">Under stress conditions colocalizes with SMN1 in punctuated cytoplasmic granules.</text>
</comment>
<comment type="similarity">
    <text evidence="10">Belongs to the histone-like Alba family.</text>
</comment>
<sequence length="140" mass="15651">MAENREPRGAVEAELDPVEYTLRKRLPSRLPRRPNDIYVNMKTDFKAQLARCQKLLDGGARGQNACSEIYIHGLGLAINRAINIALQLQAGSFGSLQVAANTSTVELVDELEPETDTREPLTRIRNNSAIHIRVFRVTPK</sequence>